<name>HUTH_ALIF1</name>
<protein>
    <recommendedName>
        <fullName evidence="1">Histidine ammonia-lyase</fullName>
        <shortName evidence="1">Histidase</shortName>
        <ecNumber evidence="1">4.3.1.3</ecNumber>
    </recommendedName>
</protein>
<organism>
    <name type="scientific">Aliivibrio fischeri (strain ATCC 700601 / ES114)</name>
    <name type="common">Vibrio fischeri</name>
    <dbReference type="NCBI Taxonomy" id="312309"/>
    <lineage>
        <taxon>Bacteria</taxon>
        <taxon>Pseudomonadati</taxon>
        <taxon>Pseudomonadota</taxon>
        <taxon>Gammaproteobacteria</taxon>
        <taxon>Vibrionales</taxon>
        <taxon>Vibrionaceae</taxon>
        <taxon>Aliivibrio</taxon>
    </lineage>
</organism>
<gene>
    <name evidence="1" type="primary">hutH</name>
    <name type="ordered locus">VF_A0450</name>
</gene>
<keyword id="KW-0963">Cytoplasm</keyword>
<keyword id="KW-0369">Histidine metabolism</keyword>
<keyword id="KW-0456">Lyase</keyword>
<keyword id="KW-1185">Reference proteome</keyword>
<dbReference type="EC" id="4.3.1.3" evidence="1"/>
<dbReference type="EMBL" id="CP000021">
    <property type="protein sequence ID" value="AAW87520.1"/>
    <property type="molecule type" value="Genomic_DNA"/>
</dbReference>
<dbReference type="RefSeq" id="WP_011263314.1">
    <property type="nucleotide sequence ID" value="NC_006841.2"/>
</dbReference>
<dbReference type="RefSeq" id="YP_206408.1">
    <property type="nucleotide sequence ID" value="NC_006841.2"/>
</dbReference>
<dbReference type="SMR" id="Q5E0C6"/>
<dbReference type="STRING" id="312309.VF_A0450"/>
<dbReference type="EnsemblBacteria" id="AAW87520">
    <property type="protein sequence ID" value="AAW87520"/>
    <property type="gene ID" value="VF_A0450"/>
</dbReference>
<dbReference type="GeneID" id="54165775"/>
<dbReference type="KEGG" id="vfi:VF_A0450"/>
<dbReference type="PATRIC" id="fig|312309.11.peg.3054"/>
<dbReference type="eggNOG" id="COG2986">
    <property type="taxonomic scope" value="Bacteria"/>
</dbReference>
<dbReference type="HOGENOM" id="CLU_014801_4_0_6"/>
<dbReference type="OrthoDB" id="9806955at2"/>
<dbReference type="UniPathway" id="UPA00379">
    <property type="reaction ID" value="UER00549"/>
</dbReference>
<dbReference type="Proteomes" id="UP000000537">
    <property type="component" value="Chromosome II"/>
</dbReference>
<dbReference type="GO" id="GO:0005737">
    <property type="term" value="C:cytoplasm"/>
    <property type="evidence" value="ECO:0007669"/>
    <property type="project" value="UniProtKB-SubCell"/>
</dbReference>
<dbReference type="GO" id="GO:0004397">
    <property type="term" value="F:histidine ammonia-lyase activity"/>
    <property type="evidence" value="ECO:0007669"/>
    <property type="project" value="UniProtKB-UniRule"/>
</dbReference>
<dbReference type="GO" id="GO:0019556">
    <property type="term" value="P:L-histidine catabolic process to glutamate and formamide"/>
    <property type="evidence" value="ECO:0007669"/>
    <property type="project" value="UniProtKB-UniPathway"/>
</dbReference>
<dbReference type="GO" id="GO:0019557">
    <property type="term" value="P:L-histidine catabolic process to glutamate and formate"/>
    <property type="evidence" value="ECO:0007669"/>
    <property type="project" value="UniProtKB-UniPathway"/>
</dbReference>
<dbReference type="CDD" id="cd00332">
    <property type="entry name" value="PAL-HAL"/>
    <property type="match status" value="1"/>
</dbReference>
<dbReference type="FunFam" id="1.10.275.10:FF:000005">
    <property type="entry name" value="Histidine ammonia-lyase"/>
    <property type="match status" value="1"/>
</dbReference>
<dbReference type="FunFam" id="1.20.200.10:FF:000003">
    <property type="entry name" value="Histidine ammonia-lyase"/>
    <property type="match status" value="1"/>
</dbReference>
<dbReference type="Gene3D" id="1.20.200.10">
    <property type="entry name" value="Fumarase/aspartase (Central domain)"/>
    <property type="match status" value="1"/>
</dbReference>
<dbReference type="Gene3D" id="1.10.275.10">
    <property type="entry name" value="Fumarase/aspartase (N-terminal domain)"/>
    <property type="match status" value="1"/>
</dbReference>
<dbReference type="HAMAP" id="MF_00229">
    <property type="entry name" value="His_ammonia_lyase"/>
    <property type="match status" value="1"/>
</dbReference>
<dbReference type="InterPro" id="IPR001106">
    <property type="entry name" value="Aromatic_Lyase"/>
</dbReference>
<dbReference type="InterPro" id="IPR024083">
    <property type="entry name" value="Fumarase/histidase_N"/>
</dbReference>
<dbReference type="InterPro" id="IPR005921">
    <property type="entry name" value="HutH"/>
</dbReference>
<dbReference type="InterPro" id="IPR008948">
    <property type="entry name" value="L-Aspartase-like"/>
</dbReference>
<dbReference type="InterPro" id="IPR022313">
    <property type="entry name" value="Phe/His_NH3-lyase_AS"/>
</dbReference>
<dbReference type="NCBIfam" id="TIGR01225">
    <property type="entry name" value="hutH"/>
    <property type="match status" value="1"/>
</dbReference>
<dbReference type="NCBIfam" id="NF006871">
    <property type="entry name" value="PRK09367.1"/>
    <property type="match status" value="1"/>
</dbReference>
<dbReference type="PANTHER" id="PTHR10362">
    <property type="entry name" value="HISTIDINE AMMONIA-LYASE"/>
    <property type="match status" value="1"/>
</dbReference>
<dbReference type="Pfam" id="PF00221">
    <property type="entry name" value="Lyase_aromatic"/>
    <property type="match status" value="1"/>
</dbReference>
<dbReference type="SUPFAM" id="SSF48557">
    <property type="entry name" value="L-aspartase-like"/>
    <property type="match status" value="1"/>
</dbReference>
<dbReference type="PROSITE" id="PS00488">
    <property type="entry name" value="PAL_HISTIDASE"/>
    <property type="match status" value="1"/>
</dbReference>
<sequence>MYSLEIIPGKLSLKQLREVSRHPTKLSLDPNALPDMLISADVVAQVIEEGKTVYGINTGFGLLANTRIAEKDLETLQRSIVLSHAAGIGEFMDDATVRLMMVLKINSLARGYSGIRPLVIDALIQLVNSEVYPCIPKKGSVGASGDLAPLAHMSTVLLGEGEARYRGEVITGKTALEIAGLTPITLAPKEGLALLNGTQASTAFALEGLFAAEDLYASATVCGAMSVEAALGSRKPFDPRIHRVRGHRSQMDAALAYRHLLAQSSDIGLSHQCCERVQDPYSLRCQPQVMGACLQQIRNSADILEIEANSVSDNPLVFADDGDIISGGNFHAEPVAMAADNLALAISEIGSLSERRMALLIDSGLSKLPPFLVDNGGVNSGFMIAQVTAAALASENKTLAHPASIDSLPTSANQEDHVSMATFAGRRLGDMAENTRGILAVELLAAAQGLDFRAPNKSSNRIEKAKELLRERVDFYDKDRYFAPDIAKANSLLKEAVYNHLMPDTLLPSI</sequence>
<comment type="catalytic activity">
    <reaction evidence="1">
        <text>L-histidine = trans-urocanate + NH4(+)</text>
        <dbReference type="Rhea" id="RHEA:21232"/>
        <dbReference type="ChEBI" id="CHEBI:17771"/>
        <dbReference type="ChEBI" id="CHEBI:28938"/>
        <dbReference type="ChEBI" id="CHEBI:57595"/>
        <dbReference type="EC" id="4.3.1.3"/>
    </reaction>
</comment>
<comment type="pathway">
    <text evidence="1">Amino-acid degradation; L-histidine degradation into L-glutamate; N-formimidoyl-L-glutamate from L-histidine: step 1/3.</text>
</comment>
<comment type="subcellular location">
    <subcellularLocation>
        <location evidence="1">Cytoplasm</location>
    </subcellularLocation>
</comment>
<comment type="PTM">
    <text evidence="1">Contains an active site 4-methylidene-imidazol-5-one (MIO), which is formed autocatalytically by cyclization and dehydration of residues Ala-Ser-Gly.</text>
</comment>
<comment type="similarity">
    <text evidence="1">Belongs to the PAL/histidase family.</text>
</comment>
<accession>Q5E0C6</accession>
<reference key="1">
    <citation type="journal article" date="2005" name="Proc. Natl. Acad. Sci. U.S.A.">
        <title>Complete genome sequence of Vibrio fischeri: a symbiotic bacterium with pathogenic congeners.</title>
        <authorList>
            <person name="Ruby E.G."/>
            <person name="Urbanowski M."/>
            <person name="Campbell J."/>
            <person name="Dunn A."/>
            <person name="Faini M."/>
            <person name="Gunsalus R."/>
            <person name="Lostroh P."/>
            <person name="Lupp C."/>
            <person name="McCann J."/>
            <person name="Millikan D."/>
            <person name="Schaefer A."/>
            <person name="Stabb E."/>
            <person name="Stevens A."/>
            <person name="Visick K."/>
            <person name="Whistler C."/>
            <person name="Greenberg E.P."/>
        </authorList>
    </citation>
    <scope>NUCLEOTIDE SEQUENCE [LARGE SCALE GENOMIC DNA]</scope>
    <source>
        <strain>ATCC 700601 / ES114</strain>
    </source>
</reference>
<feature type="chain" id="PRO_0000161047" description="Histidine ammonia-lyase">
    <location>
        <begin position="1"/>
        <end position="510"/>
    </location>
</feature>
<feature type="modified residue" description="2,3-didehydroalanine (Ser)" evidence="1">
    <location>
        <position position="144"/>
    </location>
</feature>
<feature type="cross-link" description="5-imidazolinone (Ala-Gly)" evidence="1">
    <location>
        <begin position="143"/>
        <end position="145"/>
    </location>
</feature>
<evidence type="ECO:0000255" key="1">
    <source>
        <dbReference type="HAMAP-Rule" id="MF_00229"/>
    </source>
</evidence>
<proteinExistence type="inferred from homology"/>